<comment type="similarity">
    <text evidence="2">Belongs to the UPF0337 (CsbD) family.</text>
</comment>
<feature type="chain" id="PRO_0000210023" description="UPF0337 protein RA1131">
    <location>
        <begin position="1"/>
        <end position="63"/>
    </location>
</feature>
<feature type="region of interest" description="Disordered" evidence="1">
    <location>
        <begin position="1"/>
        <end position="63"/>
    </location>
</feature>
<feature type="compositionally biased region" description="Low complexity" evidence="1">
    <location>
        <begin position="34"/>
        <end position="49"/>
    </location>
</feature>
<feature type="compositionally biased region" description="Basic and acidic residues" evidence="1">
    <location>
        <begin position="51"/>
        <end position="63"/>
    </location>
</feature>
<organism>
    <name type="scientific">Rhizobium meliloti (strain 1021)</name>
    <name type="common">Ensifer meliloti</name>
    <name type="synonym">Sinorhizobium meliloti</name>
    <dbReference type="NCBI Taxonomy" id="266834"/>
    <lineage>
        <taxon>Bacteria</taxon>
        <taxon>Pseudomonadati</taxon>
        <taxon>Pseudomonadota</taxon>
        <taxon>Alphaproteobacteria</taxon>
        <taxon>Hyphomicrobiales</taxon>
        <taxon>Rhizobiaceae</taxon>
        <taxon>Sinorhizobium/Ensifer group</taxon>
        <taxon>Sinorhizobium</taxon>
    </lineage>
</organism>
<evidence type="ECO:0000256" key="1">
    <source>
        <dbReference type="SAM" id="MobiDB-lite"/>
    </source>
</evidence>
<evidence type="ECO:0000305" key="2"/>
<name>Y4531_RHIME</name>
<keyword id="KW-0614">Plasmid</keyword>
<keyword id="KW-1185">Reference proteome</keyword>
<proteinExistence type="inferred from homology"/>
<sequence>MGSAKDKVAGKANELAGKAKKAAGDATDNNSLRAKGAAQEAKGGAQQAKGKLKDAVKGAVDKT</sequence>
<geneLocation type="plasmid">
    <name>pSymA</name>
    <name>megaplasmid 1</name>
</geneLocation>
<gene>
    <name type="ordered locus">RA1131</name>
    <name type="ORF">SMa2071</name>
</gene>
<reference key="1">
    <citation type="journal article" date="2001" name="Proc. Natl. Acad. Sci. U.S.A.">
        <title>Nucleotide sequence and predicted functions of the entire Sinorhizobium meliloti pSymA megaplasmid.</title>
        <authorList>
            <person name="Barnett M.J."/>
            <person name="Fisher R.F."/>
            <person name="Jones T."/>
            <person name="Komp C."/>
            <person name="Abola A.P."/>
            <person name="Barloy-Hubler F."/>
            <person name="Bowser L."/>
            <person name="Capela D."/>
            <person name="Galibert F."/>
            <person name="Gouzy J."/>
            <person name="Gurjal M."/>
            <person name="Hong A."/>
            <person name="Huizar L."/>
            <person name="Hyman R.W."/>
            <person name="Kahn D."/>
            <person name="Kahn M.L."/>
            <person name="Kalman S."/>
            <person name="Keating D.H."/>
            <person name="Palm C."/>
            <person name="Peck M.C."/>
            <person name="Surzycki R."/>
            <person name="Wells D.H."/>
            <person name="Yeh K.-C."/>
            <person name="Davis R.W."/>
            <person name="Federspiel N.A."/>
            <person name="Long S.R."/>
        </authorList>
    </citation>
    <scope>NUCLEOTIDE SEQUENCE [LARGE SCALE GENOMIC DNA]</scope>
    <source>
        <strain>1021</strain>
    </source>
</reference>
<reference key="2">
    <citation type="journal article" date="2001" name="Science">
        <title>The composite genome of the legume symbiont Sinorhizobium meliloti.</title>
        <authorList>
            <person name="Galibert F."/>
            <person name="Finan T.M."/>
            <person name="Long S.R."/>
            <person name="Puehler A."/>
            <person name="Abola P."/>
            <person name="Ampe F."/>
            <person name="Barloy-Hubler F."/>
            <person name="Barnett M.J."/>
            <person name="Becker A."/>
            <person name="Boistard P."/>
            <person name="Bothe G."/>
            <person name="Boutry M."/>
            <person name="Bowser L."/>
            <person name="Buhrmester J."/>
            <person name="Cadieu E."/>
            <person name="Capela D."/>
            <person name="Chain P."/>
            <person name="Cowie A."/>
            <person name="Davis R.W."/>
            <person name="Dreano S."/>
            <person name="Federspiel N.A."/>
            <person name="Fisher R.F."/>
            <person name="Gloux S."/>
            <person name="Godrie T."/>
            <person name="Goffeau A."/>
            <person name="Golding B."/>
            <person name="Gouzy J."/>
            <person name="Gurjal M."/>
            <person name="Hernandez-Lucas I."/>
            <person name="Hong A."/>
            <person name="Huizar L."/>
            <person name="Hyman R.W."/>
            <person name="Jones T."/>
            <person name="Kahn D."/>
            <person name="Kahn M.L."/>
            <person name="Kalman S."/>
            <person name="Keating D.H."/>
            <person name="Kiss E."/>
            <person name="Komp C."/>
            <person name="Lelaure V."/>
            <person name="Masuy D."/>
            <person name="Palm C."/>
            <person name="Peck M.C."/>
            <person name="Pohl T.M."/>
            <person name="Portetelle D."/>
            <person name="Purnelle B."/>
            <person name="Ramsperger U."/>
            <person name="Surzycki R."/>
            <person name="Thebault P."/>
            <person name="Vandenbol M."/>
            <person name="Vorhoelter F.J."/>
            <person name="Weidner S."/>
            <person name="Wells D.H."/>
            <person name="Wong K."/>
            <person name="Yeh K.-C."/>
            <person name="Batut J."/>
        </authorList>
    </citation>
    <scope>NUCLEOTIDE SEQUENCE [LARGE SCALE GENOMIC DNA]</scope>
    <source>
        <strain>1021</strain>
    </source>
</reference>
<protein>
    <recommendedName>
        <fullName>UPF0337 protein RA1131</fullName>
    </recommendedName>
</protein>
<accession>Q92XV9</accession>
<dbReference type="EMBL" id="AE006469">
    <property type="protein sequence ID" value="AAK65789.2"/>
    <property type="molecule type" value="Genomic_DNA"/>
</dbReference>
<dbReference type="PIR" id="C95403">
    <property type="entry name" value="C95403"/>
</dbReference>
<dbReference type="RefSeq" id="NP_436377.2">
    <property type="nucleotide sequence ID" value="NC_003037.1"/>
</dbReference>
<dbReference type="RefSeq" id="WP_010968084.1">
    <property type="nucleotide sequence ID" value="NC_003037.1"/>
</dbReference>
<dbReference type="SMR" id="Q92XV9"/>
<dbReference type="EnsemblBacteria" id="AAK65789">
    <property type="protein sequence ID" value="AAK65789"/>
    <property type="gene ID" value="SMa2071"/>
</dbReference>
<dbReference type="KEGG" id="sme:SMa2071"/>
<dbReference type="PATRIC" id="fig|266834.11.peg.1182"/>
<dbReference type="HOGENOM" id="CLU_135567_3_2_5"/>
<dbReference type="Proteomes" id="UP000001976">
    <property type="component" value="Plasmid pSymA"/>
</dbReference>
<dbReference type="Gene3D" id="1.10.1470.10">
    <property type="entry name" value="YjbJ"/>
    <property type="match status" value="1"/>
</dbReference>
<dbReference type="InterPro" id="IPR008462">
    <property type="entry name" value="CsbD"/>
</dbReference>
<dbReference type="InterPro" id="IPR036629">
    <property type="entry name" value="YjbJ_sf"/>
</dbReference>
<dbReference type="Pfam" id="PF05532">
    <property type="entry name" value="CsbD"/>
    <property type="match status" value="1"/>
</dbReference>
<dbReference type="SUPFAM" id="SSF69047">
    <property type="entry name" value="Hypothetical protein YjbJ"/>
    <property type="match status" value="1"/>
</dbReference>